<reference key="1">
    <citation type="submission" date="2007-06" db="EMBL/GenBank/DDBJ databases">
        <title>Complete sequence of Sinorhizobium medicae WSM419 chromosome.</title>
        <authorList>
            <consortium name="US DOE Joint Genome Institute"/>
            <person name="Copeland A."/>
            <person name="Lucas S."/>
            <person name="Lapidus A."/>
            <person name="Barry K."/>
            <person name="Glavina del Rio T."/>
            <person name="Dalin E."/>
            <person name="Tice H."/>
            <person name="Pitluck S."/>
            <person name="Chain P."/>
            <person name="Malfatti S."/>
            <person name="Shin M."/>
            <person name="Vergez L."/>
            <person name="Schmutz J."/>
            <person name="Larimer F."/>
            <person name="Land M."/>
            <person name="Hauser L."/>
            <person name="Kyrpides N."/>
            <person name="Mikhailova N."/>
            <person name="Reeve W.G."/>
            <person name="Richardson P."/>
        </authorList>
    </citation>
    <scope>NUCLEOTIDE SEQUENCE [LARGE SCALE GENOMIC DNA]</scope>
    <source>
        <strain>WSM419</strain>
    </source>
</reference>
<organism>
    <name type="scientific">Sinorhizobium medicae (strain WSM419)</name>
    <name type="common">Ensifer medicae</name>
    <dbReference type="NCBI Taxonomy" id="366394"/>
    <lineage>
        <taxon>Bacteria</taxon>
        <taxon>Pseudomonadati</taxon>
        <taxon>Pseudomonadota</taxon>
        <taxon>Alphaproteobacteria</taxon>
        <taxon>Hyphomicrobiales</taxon>
        <taxon>Rhizobiaceae</taxon>
        <taxon>Sinorhizobium/Ensifer group</taxon>
        <taxon>Sinorhizobium</taxon>
    </lineage>
</organism>
<comment type="function">
    <text evidence="1">Catalyzes the NADPH-dependent reduction of L-glutamate 5-phosphate into L-glutamate 5-semialdehyde and phosphate. The product spontaneously undergoes cyclization to form 1-pyrroline-5-carboxylate.</text>
</comment>
<comment type="catalytic activity">
    <reaction evidence="1">
        <text>L-glutamate 5-semialdehyde + phosphate + NADP(+) = L-glutamyl 5-phosphate + NADPH + H(+)</text>
        <dbReference type="Rhea" id="RHEA:19541"/>
        <dbReference type="ChEBI" id="CHEBI:15378"/>
        <dbReference type="ChEBI" id="CHEBI:43474"/>
        <dbReference type="ChEBI" id="CHEBI:57783"/>
        <dbReference type="ChEBI" id="CHEBI:58066"/>
        <dbReference type="ChEBI" id="CHEBI:58274"/>
        <dbReference type="ChEBI" id="CHEBI:58349"/>
        <dbReference type="EC" id="1.2.1.41"/>
    </reaction>
</comment>
<comment type="pathway">
    <text evidence="1">Amino-acid biosynthesis; L-proline biosynthesis; L-glutamate 5-semialdehyde from L-glutamate: step 2/2.</text>
</comment>
<comment type="subcellular location">
    <subcellularLocation>
        <location evidence="1">Cytoplasm</location>
    </subcellularLocation>
</comment>
<comment type="similarity">
    <text evidence="1">Belongs to the gamma-glutamyl phosphate reductase family.</text>
</comment>
<feature type="chain" id="PRO_1000049993" description="Gamma-glutamyl phosphate reductase">
    <location>
        <begin position="1"/>
        <end position="427"/>
    </location>
</feature>
<keyword id="KW-0028">Amino-acid biosynthesis</keyword>
<keyword id="KW-0963">Cytoplasm</keyword>
<keyword id="KW-0521">NADP</keyword>
<keyword id="KW-0560">Oxidoreductase</keyword>
<keyword id="KW-0641">Proline biosynthesis</keyword>
<dbReference type="EC" id="1.2.1.41" evidence="1"/>
<dbReference type="EMBL" id="CP000738">
    <property type="protein sequence ID" value="ABR61838.1"/>
    <property type="molecule type" value="Genomic_DNA"/>
</dbReference>
<dbReference type="RefSeq" id="WP_012067219.1">
    <property type="nucleotide sequence ID" value="NC_009636.1"/>
</dbReference>
<dbReference type="RefSeq" id="YP_001328673.1">
    <property type="nucleotide sequence ID" value="NC_009636.1"/>
</dbReference>
<dbReference type="SMR" id="A6UDV8"/>
<dbReference type="STRING" id="366394.Smed_3011"/>
<dbReference type="KEGG" id="smd:Smed_3011"/>
<dbReference type="PATRIC" id="fig|366394.8.peg.6236"/>
<dbReference type="eggNOG" id="COG0014">
    <property type="taxonomic scope" value="Bacteria"/>
</dbReference>
<dbReference type="HOGENOM" id="CLU_030231_0_0_5"/>
<dbReference type="OrthoDB" id="9809970at2"/>
<dbReference type="UniPathway" id="UPA00098">
    <property type="reaction ID" value="UER00360"/>
</dbReference>
<dbReference type="Proteomes" id="UP000001108">
    <property type="component" value="Chromosome"/>
</dbReference>
<dbReference type="GO" id="GO:0005737">
    <property type="term" value="C:cytoplasm"/>
    <property type="evidence" value="ECO:0007669"/>
    <property type="project" value="UniProtKB-SubCell"/>
</dbReference>
<dbReference type="GO" id="GO:0004350">
    <property type="term" value="F:glutamate-5-semialdehyde dehydrogenase activity"/>
    <property type="evidence" value="ECO:0007669"/>
    <property type="project" value="UniProtKB-UniRule"/>
</dbReference>
<dbReference type="GO" id="GO:0050661">
    <property type="term" value="F:NADP binding"/>
    <property type="evidence" value="ECO:0007669"/>
    <property type="project" value="InterPro"/>
</dbReference>
<dbReference type="GO" id="GO:0055129">
    <property type="term" value="P:L-proline biosynthetic process"/>
    <property type="evidence" value="ECO:0007669"/>
    <property type="project" value="UniProtKB-UniRule"/>
</dbReference>
<dbReference type="CDD" id="cd07079">
    <property type="entry name" value="ALDH_F18-19_ProA-GPR"/>
    <property type="match status" value="1"/>
</dbReference>
<dbReference type="Gene3D" id="3.40.605.10">
    <property type="entry name" value="Aldehyde Dehydrogenase, Chain A, domain 1"/>
    <property type="match status" value="1"/>
</dbReference>
<dbReference type="Gene3D" id="3.40.309.10">
    <property type="entry name" value="Aldehyde Dehydrogenase, Chain A, domain 2"/>
    <property type="match status" value="1"/>
</dbReference>
<dbReference type="HAMAP" id="MF_00412">
    <property type="entry name" value="ProA"/>
    <property type="match status" value="1"/>
</dbReference>
<dbReference type="InterPro" id="IPR016161">
    <property type="entry name" value="Ald_DH/histidinol_DH"/>
</dbReference>
<dbReference type="InterPro" id="IPR016163">
    <property type="entry name" value="Ald_DH_C"/>
</dbReference>
<dbReference type="InterPro" id="IPR016162">
    <property type="entry name" value="Ald_DH_N"/>
</dbReference>
<dbReference type="InterPro" id="IPR015590">
    <property type="entry name" value="Aldehyde_DH_dom"/>
</dbReference>
<dbReference type="InterPro" id="IPR020593">
    <property type="entry name" value="G-glutamylP_reductase_CS"/>
</dbReference>
<dbReference type="InterPro" id="IPR012134">
    <property type="entry name" value="Glu-5-SA_DH"/>
</dbReference>
<dbReference type="InterPro" id="IPR000965">
    <property type="entry name" value="GPR_dom"/>
</dbReference>
<dbReference type="NCBIfam" id="NF001221">
    <property type="entry name" value="PRK00197.1"/>
    <property type="match status" value="1"/>
</dbReference>
<dbReference type="NCBIfam" id="TIGR00407">
    <property type="entry name" value="proA"/>
    <property type="match status" value="1"/>
</dbReference>
<dbReference type="PANTHER" id="PTHR11063:SF8">
    <property type="entry name" value="DELTA-1-PYRROLINE-5-CARBOXYLATE SYNTHASE"/>
    <property type="match status" value="1"/>
</dbReference>
<dbReference type="PANTHER" id="PTHR11063">
    <property type="entry name" value="GLUTAMATE SEMIALDEHYDE DEHYDROGENASE"/>
    <property type="match status" value="1"/>
</dbReference>
<dbReference type="Pfam" id="PF00171">
    <property type="entry name" value="Aldedh"/>
    <property type="match status" value="1"/>
</dbReference>
<dbReference type="PIRSF" id="PIRSF000151">
    <property type="entry name" value="GPR"/>
    <property type="match status" value="1"/>
</dbReference>
<dbReference type="SUPFAM" id="SSF53720">
    <property type="entry name" value="ALDH-like"/>
    <property type="match status" value="1"/>
</dbReference>
<dbReference type="PROSITE" id="PS01223">
    <property type="entry name" value="PROA"/>
    <property type="match status" value="1"/>
</dbReference>
<sequence length="427" mass="44914">MLETVENGDDVKAIMLEIGRRAKAAARPLAVASAERKHAALVAVAGALGARAAEILAANALDLENARESGVANAFIDRLTLTESRIRDMADGIRAIAELKDPVGEVIAEWDRPNGLHIERVRTPLGVIGVIYESRPNVTADAGALCLKAGNAVILRGGSDSFHSSRAIHACLVEGLKAAGLPADAIQMVPVADRAAVGAMLTGLNGAVDVIVPRGGKSLVARVQNEARVPVFAHLEGLCHIYVDASADLAMATQIVVNAKMRRTGICGAAETLLIDRNAAEKLARPLIEALVEAGCEVRAESSLSSVMPGLKSATDEDWATEYLDAIISVKLVDGISGAIEHINIWSSAHTEAIIAEEPRVVERFFSEIDSAILLHNASTQFADGGEFGMGGEIGIATGKMHARGPVGVEQLTSFKYRVRGTGQVRP</sequence>
<gene>
    <name evidence="1" type="primary">proA</name>
    <name type="ordered locus">Smed_3011</name>
</gene>
<evidence type="ECO:0000255" key="1">
    <source>
        <dbReference type="HAMAP-Rule" id="MF_00412"/>
    </source>
</evidence>
<accession>A6UDV8</accession>
<proteinExistence type="inferred from homology"/>
<name>PROA_SINMW</name>
<protein>
    <recommendedName>
        <fullName evidence="1">Gamma-glutamyl phosphate reductase</fullName>
        <shortName evidence="1">GPR</shortName>
        <ecNumber evidence="1">1.2.1.41</ecNumber>
    </recommendedName>
    <alternativeName>
        <fullName evidence="1">Glutamate-5-semialdehyde dehydrogenase</fullName>
    </alternativeName>
    <alternativeName>
        <fullName evidence="1">Glutamyl-gamma-semialdehyde dehydrogenase</fullName>
        <shortName evidence="1">GSA dehydrogenase</shortName>
    </alternativeName>
</protein>